<protein>
    <recommendedName>
        <fullName evidence="1">tRNA-2-methylthio-N(6)-dimethylallyladenosine synthase</fullName>
        <ecNumber evidence="1">2.8.4.3</ecNumber>
    </recommendedName>
    <alternativeName>
        <fullName evidence="1">(Dimethylallyl)adenosine tRNA methylthiotransferase MiaB</fullName>
    </alternativeName>
    <alternativeName>
        <fullName evidence="1">tRNA-i(6)A37 methylthiotransferase</fullName>
    </alternativeName>
</protein>
<dbReference type="EC" id="2.8.4.3" evidence="1"/>
<dbReference type="EMBL" id="CP000267">
    <property type="protein sequence ID" value="ABD71074.1"/>
    <property type="molecule type" value="Genomic_DNA"/>
</dbReference>
<dbReference type="RefSeq" id="WP_011465637.1">
    <property type="nucleotide sequence ID" value="NC_007908.1"/>
</dbReference>
<dbReference type="SMR" id="Q21T29"/>
<dbReference type="STRING" id="338969.Rfer_3365"/>
<dbReference type="KEGG" id="rfr:Rfer_3365"/>
<dbReference type="eggNOG" id="COG0621">
    <property type="taxonomic scope" value="Bacteria"/>
</dbReference>
<dbReference type="HOGENOM" id="CLU_018697_2_0_4"/>
<dbReference type="OrthoDB" id="9805215at2"/>
<dbReference type="Proteomes" id="UP000008332">
    <property type="component" value="Chromosome"/>
</dbReference>
<dbReference type="GO" id="GO:0005829">
    <property type="term" value="C:cytosol"/>
    <property type="evidence" value="ECO:0007669"/>
    <property type="project" value="TreeGrafter"/>
</dbReference>
<dbReference type="GO" id="GO:0051539">
    <property type="term" value="F:4 iron, 4 sulfur cluster binding"/>
    <property type="evidence" value="ECO:0007669"/>
    <property type="project" value="UniProtKB-UniRule"/>
</dbReference>
<dbReference type="GO" id="GO:0046872">
    <property type="term" value="F:metal ion binding"/>
    <property type="evidence" value="ECO:0007669"/>
    <property type="project" value="UniProtKB-KW"/>
</dbReference>
<dbReference type="GO" id="GO:0035597">
    <property type="term" value="F:N6-isopentenyladenosine methylthiotransferase activity"/>
    <property type="evidence" value="ECO:0007669"/>
    <property type="project" value="TreeGrafter"/>
</dbReference>
<dbReference type="CDD" id="cd01335">
    <property type="entry name" value="Radical_SAM"/>
    <property type="match status" value="1"/>
</dbReference>
<dbReference type="FunFam" id="3.40.50.12160:FF:000001">
    <property type="entry name" value="tRNA-2-methylthio-N(6)-dimethylallyladenosine synthase"/>
    <property type="match status" value="1"/>
</dbReference>
<dbReference type="FunFam" id="3.80.30.20:FF:000001">
    <property type="entry name" value="tRNA-2-methylthio-N(6)-dimethylallyladenosine synthase 2"/>
    <property type="match status" value="1"/>
</dbReference>
<dbReference type="Gene3D" id="3.40.50.12160">
    <property type="entry name" value="Methylthiotransferase, N-terminal domain"/>
    <property type="match status" value="1"/>
</dbReference>
<dbReference type="Gene3D" id="3.80.30.20">
    <property type="entry name" value="tm_1862 like domain"/>
    <property type="match status" value="1"/>
</dbReference>
<dbReference type="HAMAP" id="MF_01864">
    <property type="entry name" value="tRNA_metthiotr_MiaB"/>
    <property type="match status" value="1"/>
</dbReference>
<dbReference type="InterPro" id="IPR006638">
    <property type="entry name" value="Elp3/MiaA/NifB-like_rSAM"/>
</dbReference>
<dbReference type="InterPro" id="IPR005839">
    <property type="entry name" value="Methylthiotransferase"/>
</dbReference>
<dbReference type="InterPro" id="IPR020612">
    <property type="entry name" value="Methylthiotransferase_CS"/>
</dbReference>
<dbReference type="InterPro" id="IPR013848">
    <property type="entry name" value="Methylthiotransferase_N"/>
</dbReference>
<dbReference type="InterPro" id="IPR038135">
    <property type="entry name" value="Methylthiotransferase_N_sf"/>
</dbReference>
<dbReference type="InterPro" id="IPR006463">
    <property type="entry name" value="MiaB_methiolase"/>
</dbReference>
<dbReference type="InterPro" id="IPR007197">
    <property type="entry name" value="rSAM"/>
</dbReference>
<dbReference type="InterPro" id="IPR023404">
    <property type="entry name" value="rSAM_horseshoe"/>
</dbReference>
<dbReference type="InterPro" id="IPR002792">
    <property type="entry name" value="TRAM_dom"/>
</dbReference>
<dbReference type="NCBIfam" id="TIGR01574">
    <property type="entry name" value="miaB-methiolase"/>
    <property type="match status" value="1"/>
</dbReference>
<dbReference type="NCBIfam" id="TIGR00089">
    <property type="entry name" value="MiaB/RimO family radical SAM methylthiotransferase"/>
    <property type="match status" value="1"/>
</dbReference>
<dbReference type="PANTHER" id="PTHR43020">
    <property type="entry name" value="CDK5 REGULATORY SUBUNIT-ASSOCIATED PROTEIN 1"/>
    <property type="match status" value="1"/>
</dbReference>
<dbReference type="PANTHER" id="PTHR43020:SF2">
    <property type="entry name" value="MITOCHONDRIAL TRNA METHYLTHIOTRANSFERASE CDK5RAP1"/>
    <property type="match status" value="1"/>
</dbReference>
<dbReference type="Pfam" id="PF04055">
    <property type="entry name" value="Radical_SAM"/>
    <property type="match status" value="1"/>
</dbReference>
<dbReference type="Pfam" id="PF01938">
    <property type="entry name" value="TRAM"/>
    <property type="match status" value="1"/>
</dbReference>
<dbReference type="Pfam" id="PF00919">
    <property type="entry name" value="UPF0004"/>
    <property type="match status" value="1"/>
</dbReference>
<dbReference type="SFLD" id="SFLDF00273">
    <property type="entry name" value="(dimethylallyl)adenosine_tRNA"/>
    <property type="match status" value="1"/>
</dbReference>
<dbReference type="SFLD" id="SFLDG01082">
    <property type="entry name" value="B12-binding_domain_containing"/>
    <property type="match status" value="1"/>
</dbReference>
<dbReference type="SFLD" id="SFLDG01061">
    <property type="entry name" value="methylthiotransferase"/>
    <property type="match status" value="1"/>
</dbReference>
<dbReference type="SMART" id="SM00729">
    <property type="entry name" value="Elp3"/>
    <property type="match status" value="1"/>
</dbReference>
<dbReference type="SUPFAM" id="SSF102114">
    <property type="entry name" value="Radical SAM enzymes"/>
    <property type="match status" value="1"/>
</dbReference>
<dbReference type="PROSITE" id="PS51449">
    <property type="entry name" value="MTTASE_N"/>
    <property type="match status" value="1"/>
</dbReference>
<dbReference type="PROSITE" id="PS01278">
    <property type="entry name" value="MTTASE_RADICAL"/>
    <property type="match status" value="1"/>
</dbReference>
<dbReference type="PROSITE" id="PS51918">
    <property type="entry name" value="RADICAL_SAM"/>
    <property type="match status" value="1"/>
</dbReference>
<dbReference type="PROSITE" id="PS50926">
    <property type="entry name" value="TRAM"/>
    <property type="match status" value="1"/>
</dbReference>
<feature type="chain" id="PRO_0000374491" description="tRNA-2-methylthio-N(6)-dimethylallyladenosine synthase">
    <location>
        <begin position="1"/>
        <end position="452"/>
    </location>
</feature>
<feature type="domain" description="MTTase N-terminal" evidence="1">
    <location>
        <begin position="3"/>
        <end position="118"/>
    </location>
</feature>
<feature type="domain" description="Radical SAM core" evidence="2">
    <location>
        <begin position="141"/>
        <end position="379"/>
    </location>
</feature>
<feature type="domain" description="TRAM" evidence="1">
    <location>
        <begin position="382"/>
        <end position="445"/>
    </location>
</feature>
<feature type="binding site" evidence="1">
    <location>
        <position position="12"/>
    </location>
    <ligand>
        <name>[4Fe-4S] cluster</name>
        <dbReference type="ChEBI" id="CHEBI:49883"/>
        <label>1</label>
    </ligand>
</feature>
<feature type="binding site" evidence="1">
    <location>
        <position position="49"/>
    </location>
    <ligand>
        <name>[4Fe-4S] cluster</name>
        <dbReference type="ChEBI" id="CHEBI:49883"/>
        <label>1</label>
    </ligand>
</feature>
<feature type="binding site" evidence="1">
    <location>
        <position position="81"/>
    </location>
    <ligand>
        <name>[4Fe-4S] cluster</name>
        <dbReference type="ChEBI" id="CHEBI:49883"/>
        <label>1</label>
    </ligand>
</feature>
<feature type="binding site" evidence="1">
    <location>
        <position position="155"/>
    </location>
    <ligand>
        <name>[4Fe-4S] cluster</name>
        <dbReference type="ChEBI" id="CHEBI:49883"/>
        <label>2</label>
        <note>4Fe-4S-S-AdoMet</note>
    </ligand>
</feature>
<feature type="binding site" evidence="1">
    <location>
        <position position="159"/>
    </location>
    <ligand>
        <name>[4Fe-4S] cluster</name>
        <dbReference type="ChEBI" id="CHEBI:49883"/>
        <label>2</label>
        <note>4Fe-4S-S-AdoMet</note>
    </ligand>
</feature>
<feature type="binding site" evidence="1">
    <location>
        <position position="162"/>
    </location>
    <ligand>
        <name>[4Fe-4S] cluster</name>
        <dbReference type="ChEBI" id="CHEBI:49883"/>
        <label>2</label>
        <note>4Fe-4S-S-AdoMet</note>
    </ligand>
</feature>
<sequence length="452" mass="50291">MSKKVFIKTYGCQMNEYDSDKMSDVLGAAQGYEPTDNVEEADLILFNTCSVREKAQEKVFSDLGRVKHLKKKGALIGVGGCVASQEGAAIIERAPYVDVVFGPQTLHRLPQLLAERERLNRSQVDISFPEIEKFDHLPPARVEGASAFVSIMEGCSKYCSYCVVPYTRGEEVSRPFEDVLVEVAGLADQGVKEITLLGQNVNAWRSRMIGAASALSSEMADFATLLEYVSDIPGIERIRYVTSHPNEFTPSLIAAYDKLPKLVSHLHLPVQHGSDRILMAMKRGYTAMEYKSTVRKLRAIRPDMALSSDFIVGFPGETEDDFSKMMKLIDDVGFDNSFSFIFSPRPGTPAANLHDDTPHEVKLRRLQHLQTVINDSIKRISESRLGTVQRILVEGASKRDSTELMGRTECNRVVNFCGQPRLIGQMVDVAITETRSFTLRGEVVTQNEVLTG</sequence>
<name>MIAB_ALBFT</name>
<proteinExistence type="inferred from homology"/>
<organism>
    <name type="scientific">Albidiferax ferrireducens (strain ATCC BAA-621 / DSM 15236 / T118)</name>
    <name type="common">Rhodoferax ferrireducens</name>
    <dbReference type="NCBI Taxonomy" id="338969"/>
    <lineage>
        <taxon>Bacteria</taxon>
        <taxon>Pseudomonadati</taxon>
        <taxon>Pseudomonadota</taxon>
        <taxon>Betaproteobacteria</taxon>
        <taxon>Burkholderiales</taxon>
        <taxon>Comamonadaceae</taxon>
        <taxon>Rhodoferax</taxon>
    </lineage>
</organism>
<evidence type="ECO:0000255" key="1">
    <source>
        <dbReference type="HAMAP-Rule" id="MF_01864"/>
    </source>
</evidence>
<evidence type="ECO:0000255" key="2">
    <source>
        <dbReference type="PROSITE-ProRule" id="PRU01266"/>
    </source>
</evidence>
<reference key="1">
    <citation type="submission" date="2006-02" db="EMBL/GenBank/DDBJ databases">
        <title>Complete sequence of chromosome of Rhodoferax ferrireducens DSM 15236.</title>
        <authorList>
            <person name="Copeland A."/>
            <person name="Lucas S."/>
            <person name="Lapidus A."/>
            <person name="Barry K."/>
            <person name="Detter J.C."/>
            <person name="Glavina del Rio T."/>
            <person name="Hammon N."/>
            <person name="Israni S."/>
            <person name="Pitluck S."/>
            <person name="Brettin T."/>
            <person name="Bruce D."/>
            <person name="Han C."/>
            <person name="Tapia R."/>
            <person name="Gilna P."/>
            <person name="Kiss H."/>
            <person name="Schmutz J."/>
            <person name="Larimer F."/>
            <person name="Land M."/>
            <person name="Kyrpides N."/>
            <person name="Ivanova N."/>
            <person name="Richardson P."/>
        </authorList>
    </citation>
    <scope>NUCLEOTIDE SEQUENCE [LARGE SCALE GENOMIC DNA]</scope>
    <source>
        <strain>ATCC BAA-621 / DSM 15236 / T118</strain>
    </source>
</reference>
<keyword id="KW-0004">4Fe-4S</keyword>
<keyword id="KW-0963">Cytoplasm</keyword>
<keyword id="KW-0408">Iron</keyword>
<keyword id="KW-0411">Iron-sulfur</keyword>
<keyword id="KW-0479">Metal-binding</keyword>
<keyword id="KW-1185">Reference proteome</keyword>
<keyword id="KW-0949">S-adenosyl-L-methionine</keyword>
<keyword id="KW-0808">Transferase</keyword>
<keyword id="KW-0819">tRNA processing</keyword>
<accession>Q21T29</accession>
<comment type="function">
    <text evidence="1">Catalyzes the methylthiolation of N6-(dimethylallyl)adenosine (i(6)A), leading to the formation of 2-methylthio-N6-(dimethylallyl)adenosine (ms(2)i(6)A) at position 37 in tRNAs that read codons beginning with uridine.</text>
</comment>
<comment type="catalytic activity">
    <reaction evidence="1">
        <text>N(6)-dimethylallyladenosine(37) in tRNA + (sulfur carrier)-SH + AH2 + 2 S-adenosyl-L-methionine = 2-methylsulfanyl-N(6)-dimethylallyladenosine(37) in tRNA + (sulfur carrier)-H + 5'-deoxyadenosine + L-methionine + A + S-adenosyl-L-homocysteine + 2 H(+)</text>
        <dbReference type="Rhea" id="RHEA:37067"/>
        <dbReference type="Rhea" id="RHEA-COMP:10375"/>
        <dbReference type="Rhea" id="RHEA-COMP:10376"/>
        <dbReference type="Rhea" id="RHEA-COMP:14737"/>
        <dbReference type="Rhea" id="RHEA-COMP:14739"/>
        <dbReference type="ChEBI" id="CHEBI:13193"/>
        <dbReference type="ChEBI" id="CHEBI:15378"/>
        <dbReference type="ChEBI" id="CHEBI:17319"/>
        <dbReference type="ChEBI" id="CHEBI:17499"/>
        <dbReference type="ChEBI" id="CHEBI:29917"/>
        <dbReference type="ChEBI" id="CHEBI:57844"/>
        <dbReference type="ChEBI" id="CHEBI:57856"/>
        <dbReference type="ChEBI" id="CHEBI:59789"/>
        <dbReference type="ChEBI" id="CHEBI:64428"/>
        <dbReference type="ChEBI" id="CHEBI:74415"/>
        <dbReference type="ChEBI" id="CHEBI:74417"/>
        <dbReference type="EC" id="2.8.4.3"/>
    </reaction>
</comment>
<comment type="cofactor">
    <cofactor evidence="1">
        <name>[4Fe-4S] cluster</name>
        <dbReference type="ChEBI" id="CHEBI:49883"/>
    </cofactor>
    <text evidence="1">Binds 2 [4Fe-4S] clusters. One cluster is coordinated with 3 cysteines and an exchangeable S-adenosyl-L-methionine.</text>
</comment>
<comment type="subunit">
    <text evidence="1">Monomer.</text>
</comment>
<comment type="subcellular location">
    <subcellularLocation>
        <location evidence="1">Cytoplasm</location>
    </subcellularLocation>
</comment>
<comment type="similarity">
    <text evidence="1">Belongs to the methylthiotransferase family. MiaB subfamily.</text>
</comment>
<gene>
    <name evidence="1" type="primary">miaB</name>
    <name type="ordered locus">Rfer_3365</name>
</gene>